<protein>
    <recommendedName>
        <fullName evidence="1">D-alanine--D-alanyl carrier protein ligase</fullName>
        <shortName evidence="1">DCL</shortName>
        <ecNumber evidence="1">6.2.1.54</ecNumber>
    </recommendedName>
    <alternativeName>
        <fullName evidence="1">D-alanine--poly(phosphoribitol) ligase subunit 1</fullName>
    </alternativeName>
    <alternativeName>
        <fullName evidence="1">D-alanine-activating enzyme</fullName>
        <shortName evidence="1">DAE</shortName>
    </alternativeName>
</protein>
<proteinExistence type="inferred from homology"/>
<evidence type="ECO:0000255" key="1">
    <source>
        <dbReference type="HAMAP-Rule" id="MF_00593"/>
    </source>
</evidence>
<keyword id="KW-0067">ATP-binding</keyword>
<keyword id="KW-0963">Cytoplasm</keyword>
<keyword id="KW-0436">Ligase</keyword>
<keyword id="KW-0547">Nucleotide-binding</keyword>
<feature type="chain" id="PRO_1000129820" description="D-alanine--D-alanyl carrier protein ligase">
    <location>
        <begin position="1"/>
        <end position="504"/>
    </location>
</feature>
<feature type="binding site" evidence="1">
    <location>
        <begin position="152"/>
        <end position="153"/>
    </location>
    <ligand>
        <name>ATP</name>
        <dbReference type="ChEBI" id="CHEBI:30616"/>
    </ligand>
</feature>
<feature type="binding site" evidence="1">
    <location>
        <position position="197"/>
    </location>
    <ligand>
        <name>D-alanine</name>
        <dbReference type="ChEBI" id="CHEBI:57416"/>
    </ligand>
</feature>
<feature type="binding site" evidence="1">
    <location>
        <begin position="292"/>
        <end position="297"/>
    </location>
    <ligand>
        <name>ATP</name>
        <dbReference type="ChEBI" id="CHEBI:30616"/>
    </ligand>
</feature>
<feature type="binding site" evidence="1">
    <location>
        <position position="301"/>
    </location>
    <ligand>
        <name>D-alanine</name>
        <dbReference type="ChEBI" id="CHEBI:57416"/>
    </ligand>
</feature>
<feature type="binding site" evidence="1">
    <location>
        <position position="383"/>
    </location>
    <ligand>
        <name>ATP</name>
        <dbReference type="ChEBI" id="CHEBI:30616"/>
    </ligand>
</feature>
<feature type="binding site" evidence="1">
    <location>
        <begin position="394"/>
        <end position="397"/>
    </location>
    <ligand>
        <name>ATP</name>
        <dbReference type="ChEBI" id="CHEBI:30616"/>
    </ligand>
</feature>
<feature type="binding site" evidence="1">
    <location>
        <position position="492"/>
    </location>
    <ligand>
        <name>ATP</name>
        <dbReference type="ChEBI" id="CHEBI:30616"/>
    </ligand>
</feature>
<feature type="binding site" evidence="1">
    <location>
        <position position="492"/>
    </location>
    <ligand>
        <name>D-alanine</name>
        <dbReference type="ChEBI" id="CHEBI:57416"/>
    </ligand>
</feature>
<gene>
    <name evidence="1" type="primary">dltA</name>
    <name type="ordered locus">BCAH187_A1530</name>
</gene>
<sequence length="504" mass="56593">MKLLEQIEKWAIETPDQTAFVWRDAKITYKQLKEDSDALAHWISSEYPDDRSPIMVYGHMQPEMIINFLGCVKAGHAYIPVDLSIPADRVQRIAENSGAKLLLSGTEVTVTDLPVRIVSEDNLKDIFFTHKGKTPNPEHAVKGDENFYIIYTSGSTGNPKGVQITYNCLVSFTKWAVEDFNLQTGQVFLNQAPFSFDLSVMDIYPSLVTGGTLWAIDKDMIARPKDLFASLEQSDIQVWTSTPSFAEMCLMEASFSESMLPNMKTFLFCGEVLPNEVARKLIERFPKATIMNTYGPTEATVAVTGIHVTEEVLNQYKSLPVGYCKSDCRLLIMKEDGTIAPDGEKGEIVIVGPSVSVGYLGSPELTEKAFTMIDGERAYKTGDAGYVENGLLFYNGRLDFQIKLHGYRMELEEIEHHLRACSYVEGAVIVPIKKGEKYDYLLAVVVPGEHSFEKEFKLTSAIKKELNERLPNYMIPRKFMYQSSIPMTPNGKVDRKKLLSEVTA</sequence>
<comment type="function">
    <text evidence="1">Catalyzes the first step in the D-alanylation of lipoteichoic acid (LTA), the activation of D-alanine and its transfer onto the D-alanyl carrier protein (Dcp) DltC. In an ATP-dependent two-step reaction, forms a high energy D-alanyl-AMP intermediate, followed by transfer of the D-alanyl residue as a thiol ester to the phosphopantheinyl prosthetic group of the Dcp. D-alanylation of LTA plays an important role in modulating the properties of the cell wall in Gram-positive bacteria, influencing the net charge of the cell wall.</text>
</comment>
<comment type="catalytic activity">
    <reaction evidence="1">
        <text>holo-[D-alanyl-carrier protein] + D-alanine + ATP = D-alanyl-[D-alanyl-carrier protein] + AMP + diphosphate</text>
        <dbReference type="Rhea" id="RHEA:55132"/>
        <dbReference type="Rhea" id="RHEA-COMP:14102"/>
        <dbReference type="Rhea" id="RHEA-COMP:14103"/>
        <dbReference type="ChEBI" id="CHEBI:30616"/>
        <dbReference type="ChEBI" id="CHEBI:33019"/>
        <dbReference type="ChEBI" id="CHEBI:57416"/>
        <dbReference type="ChEBI" id="CHEBI:64479"/>
        <dbReference type="ChEBI" id="CHEBI:138620"/>
        <dbReference type="ChEBI" id="CHEBI:456215"/>
        <dbReference type="EC" id="6.2.1.54"/>
    </reaction>
</comment>
<comment type="pathway">
    <text evidence="1">Cell wall biogenesis; lipoteichoic acid biosynthesis.</text>
</comment>
<comment type="subcellular location">
    <subcellularLocation>
        <location evidence="1">Cytoplasm</location>
    </subcellularLocation>
</comment>
<comment type="similarity">
    <text evidence="1">Belongs to the ATP-dependent AMP-binding enzyme family. DltA subfamily.</text>
</comment>
<reference key="1">
    <citation type="submission" date="2008-10" db="EMBL/GenBank/DDBJ databases">
        <title>Genome sequence of Bacillus cereus AH187.</title>
        <authorList>
            <person name="Dodson R.J."/>
            <person name="Durkin A.S."/>
            <person name="Rosovitz M.J."/>
            <person name="Rasko D.A."/>
            <person name="Kolsto A.B."/>
            <person name="Okstad O.A."/>
            <person name="Ravel J."/>
            <person name="Sutton G."/>
        </authorList>
    </citation>
    <scope>NUCLEOTIDE SEQUENCE [LARGE SCALE GENOMIC DNA]</scope>
    <source>
        <strain>AH187</strain>
    </source>
</reference>
<dbReference type="EC" id="6.2.1.54" evidence="1"/>
<dbReference type="EMBL" id="CP001177">
    <property type="protein sequence ID" value="ACJ79358.1"/>
    <property type="molecule type" value="Genomic_DNA"/>
</dbReference>
<dbReference type="SMR" id="B7HK95"/>
<dbReference type="KEGG" id="bcr:BCAH187_A1530"/>
<dbReference type="HOGENOM" id="CLU_000022_2_12_9"/>
<dbReference type="UniPathway" id="UPA00556"/>
<dbReference type="Proteomes" id="UP000002214">
    <property type="component" value="Chromosome"/>
</dbReference>
<dbReference type="GO" id="GO:0005737">
    <property type="term" value="C:cytoplasm"/>
    <property type="evidence" value="ECO:0007669"/>
    <property type="project" value="UniProtKB-SubCell"/>
</dbReference>
<dbReference type="GO" id="GO:0005524">
    <property type="term" value="F:ATP binding"/>
    <property type="evidence" value="ECO:0007669"/>
    <property type="project" value="UniProtKB-KW"/>
</dbReference>
<dbReference type="GO" id="GO:0047473">
    <property type="term" value="F:D-alanine [D-alanyl carrier protein] ligase activity"/>
    <property type="evidence" value="ECO:0007669"/>
    <property type="project" value="UniProtKB-UniRule"/>
</dbReference>
<dbReference type="GO" id="GO:0070395">
    <property type="term" value="P:lipoteichoic acid biosynthetic process"/>
    <property type="evidence" value="ECO:0007669"/>
    <property type="project" value="UniProtKB-UniRule"/>
</dbReference>
<dbReference type="CDD" id="cd05945">
    <property type="entry name" value="DltA"/>
    <property type="match status" value="1"/>
</dbReference>
<dbReference type="FunFam" id="3.30.300.30:FF:000012">
    <property type="entry name" value="D-alanine--D-alanyl carrier protein ligase"/>
    <property type="match status" value="1"/>
</dbReference>
<dbReference type="FunFam" id="3.40.50.12780:FF:000015">
    <property type="entry name" value="D-alanine--D-alanyl carrier protein ligase"/>
    <property type="match status" value="1"/>
</dbReference>
<dbReference type="Gene3D" id="3.30.300.30">
    <property type="match status" value="1"/>
</dbReference>
<dbReference type="Gene3D" id="3.40.50.12780">
    <property type="entry name" value="N-terminal domain of ligase-like"/>
    <property type="match status" value="1"/>
</dbReference>
<dbReference type="HAMAP" id="MF_00593">
    <property type="entry name" value="DltA"/>
    <property type="match status" value="1"/>
</dbReference>
<dbReference type="InterPro" id="IPR010071">
    <property type="entry name" value="AA_adenyl_dom"/>
</dbReference>
<dbReference type="InterPro" id="IPR025110">
    <property type="entry name" value="AMP-bd_C"/>
</dbReference>
<dbReference type="InterPro" id="IPR045851">
    <property type="entry name" value="AMP-bd_C_sf"/>
</dbReference>
<dbReference type="InterPro" id="IPR020845">
    <property type="entry name" value="AMP-binding_CS"/>
</dbReference>
<dbReference type="InterPro" id="IPR000873">
    <property type="entry name" value="AMP-dep_synth/lig_dom"/>
</dbReference>
<dbReference type="InterPro" id="IPR042099">
    <property type="entry name" value="ANL_N_sf"/>
</dbReference>
<dbReference type="InterPro" id="IPR010072">
    <property type="entry name" value="DltA"/>
</dbReference>
<dbReference type="InterPro" id="IPR044507">
    <property type="entry name" value="DltA-like"/>
</dbReference>
<dbReference type="NCBIfam" id="TIGR01733">
    <property type="entry name" value="AA-adenyl-dom"/>
    <property type="match status" value="1"/>
</dbReference>
<dbReference type="NCBIfam" id="TIGR01734">
    <property type="entry name" value="D-ala-DACP-lig"/>
    <property type="match status" value="1"/>
</dbReference>
<dbReference type="NCBIfam" id="NF003417">
    <property type="entry name" value="PRK04813.1"/>
    <property type="match status" value="1"/>
</dbReference>
<dbReference type="PANTHER" id="PTHR45398">
    <property type="match status" value="1"/>
</dbReference>
<dbReference type="PANTHER" id="PTHR45398:SF1">
    <property type="entry name" value="ENZYME, PUTATIVE (JCVI)-RELATED"/>
    <property type="match status" value="1"/>
</dbReference>
<dbReference type="Pfam" id="PF00501">
    <property type="entry name" value="AMP-binding"/>
    <property type="match status" value="1"/>
</dbReference>
<dbReference type="Pfam" id="PF13193">
    <property type="entry name" value="AMP-binding_C"/>
    <property type="match status" value="1"/>
</dbReference>
<dbReference type="SUPFAM" id="SSF56801">
    <property type="entry name" value="Acetyl-CoA synthetase-like"/>
    <property type="match status" value="1"/>
</dbReference>
<dbReference type="PROSITE" id="PS00455">
    <property type="entry name" value="AMP_BINDING"/>
    <property type="match status" value="1"/>
</dbReference>
<name>DLTA_BACC7</name>
<accession>B7HK95</accession>
<organism>
    <name type="scientific">Bacillus cereus (strain AH187)</name>
    <dbReference type="NCBI Taxonomy" id="405534"/>
    <lineage>
        <taxon>Bacteria</taxon>
        <taxon>Bacillati</taxon>
        <taxon>Bacillota</taxon>
        <taxon>Bacilli</taxon>
        <taxon>Bacillales</taxon>
        <taxon>Bacillaceae</taxon>
        <taxon>Bacillus</taxon>
        <taxon>Bacillus cereus group</taxon>
    </lineage>
</organism>